<sequence length="338" mass="36687">MGLEQFKKYPLTFGPTPITSMKRLSKTLGGKVEIFAKREDCNSGLAFGGNKIRKLEYLIPEAIDGGYDTLVSIGGIQSNQTRQVAAVAAHLGLDCVLIQEDWVDYKDTMYDRVGNIELSRIVNADVRLDSSKFDIGIRPSFKNALEELTKKGKKPFPIPAGCSEHPYGGLGFVGCVEEIYEQEKQLGFKFDKIVVCTVTGSSFAGIIVGMALTGRQKDVIGIDASATPEKTKAQVLRIAQNTAKLIGLEKELTESDVNIDTRFAHPAYGIPNEGTIEAIKLCGATEGVLTDPVYEGKSMQGLIHLVRNNEIAEGSKVLYIHLGGAPALSAYSAYFKNT</sequence>
<feature type="chain" id="PRO_0000184511" description="Probable 1-aminocyclopropane-1-carboxylate deaminase">
    <location>
        <begin position="1"/>
        <end position="338"/>
    </location>
</feature>
<feature type="active site" description="Nucleophile" evidence="1">
    <location>
        <position position="78"/>
    </location>
</feature>
<feature type="modified residue" description="N6-(pyridoxal phosphate)lysine" evidence="1">
    <location>
        <position position="51"/>
    </location>
</feature>
<proteinExistence type="inferred from homology"/>
<dbReference type="EC" id="3.5.99.7"/>
<dbReference type="EMBL" id="CU329670">
    <property type="protein sequence ID" value="CAB63550.1"/>
    <property type="molecule type" value="Genomic_DNA"/>
</dbReference>
<dbReference type="PIR" id="T50268">
    <property type="entry name" value="T50268"/>
</dbReference>
<dbReference type="RefSeq" id="NP_595003.1">
    <property type="nucleotide sequence ID" value="NM_001020434.2"/>
</dbReference>
<dbReference type="SMR" id="Q9URX3"/>
<dbReference type="BioGRID" id="279980">
    <property type="interactions" value="1"/>
</dbReference>
<dbReference type="FunCoup" id="Q9URX3">
    <property type="interactions" value="38"/>
</dbReference>
<dbReference type="STRING" id="284812.Q9URX3"/>
<dbReference type="iPTMnet" id="Q9URX3"/>
<dbReference type="PaxDb" id="4896-SPAC922.03.1"/>
<dbReference type="EnsemblFungi" id="SPAC922.03.1">
    <property type="protein sequence ID" value="SPAC922.03.1:pep"/>
    <property type="gene ID" value="SPAC922.03"/>
</dbReference>
<dbReference type="KEGG" id="spo:2543564"/>
<dbReference type="PomBase" id="SPAC922.03"/>
<dbReference type="VEuPathDB" id="FungiDB:SPAC922.03"/>
<dbReference type="eggNOG" id="ENOG502QPS1">
    <property type="taxonomic scope" value="Eukaryota"/>
</dbReference>
<dbReference type="HOGENOM" id="CLU_048897_2_1_1"/>
<dbReference type="InParanoid" id="Q9URX3"/>
<dbReference type="OMA" id="ERYHAGT"/>
<dbReference type="PhylomeDB" id="Q9URX3"/>
<dbReference type="PRO" id="PR:Q9URX3"/>
<dbReference type="Proteomes" id="UP000002485">
    <property type="component" value="Chromosome I"/>
</dbReference>
<dbReference type="GO" id="GO:0005829">
    <property type="term" value="C:cytosol"/>
    <property type="evidence" value="ECO:0007005"/>
    <property type="project" value="PomBase"/>
</dbReference>
<dbReference type="GO" id="GO:0005634">
    <property type="term" value="C:nucleus"/>
    <property type="evidence" value="ECO:0007005"/>
    <property type="project" value="PomBase"/>
</dbReference>
<dbReference type="GO" id="GO:0008660">
    <property type="term" value="F:1-aminocyclopropane-1-carboxylate deaminase activity"/>
    <property type="evidence" value="ECO:0007669"/>
    <property type="project" value="UniProtKB-EC"/>
</dbReference>
<dbReference type="GO" id="GO:0019148">
    <property type="term" value="F:D-cysteine desulfhydrase activity"/>
    <property type="evidence" value="ECO:0000318"/>
    <property type="project" value="GO_Central"/>
</dbReference>
<dbReference type="GO" id="GO:0030170">
    <property type="term" value="F:pyridoxal phosphate binding"/>
    <property type="evidence" value="ECO:0007669"/>
    <property type="project" value="InterPro"/>
</dbReference>
<dbReference type="GO" id="GO:0009310">
    <property type="term" value="P:amine catabolic process"/>
    <property type="evidence" value="ECO:0007669"/>
    <property type="project" value="InterPro"/>
</dbReference>
<dbReference type="GO" id="GO:1990748">
    <property type="term" value="P:cellular detoxification"/>
    <property type="evidence" value="ECO:0000303"/>
    <property type="project" value="PomBase"/>
</dbReference>
<dbReference type="CDD" id="cd06449">
    <property type="entry name" value="ACCD"/>
    <property type="match status" value="1"/>
</dbReference>
<dbReference type="FunFam" id="3.40.50.1100:FF:000048">
    <property type="entry name" value="1-aminocyclopropane-1-carboxylate deaminase"/>
    <property type="match status" value="1"/>
</dbReference>
<dbReference type="Gene3D" id="3.40.50.1100">
    <property type="match status" value="2"/>
</dbReference>
<dbReference type="InterPro" id="IPR027278">
    <property type="entry name" value="ACCD_DCysDesulf"/>
</dbReference>
<dbReference type="InterPro" id="IPR005965">
    <property type="entry name" value="ACP_carboxylate_deaminase"/>
</dbReference>
<dbReference type="InterPro" id="IPR001926">
    <property type="entry name" value="TrpB-like_PALP"/>
</dbReference>
<dbReference type="InterPro" id="IPR036052">
    <property type="entry name" value="TrpB-like_PALP_sf"/>
</dbReference>
<dbReference type="NCBIfam" id="TIGR01274">
    <property type="entry name" value="ACC_deam"/>
    <property type="match status" value="1"/>
</dbReference>
<dbReference type="PANTHER" id="PTHR43780">
    <property type="entry name" value="1-AMINOCYCLOPROPANE-1-CARBOXYLATE DEAMINASE-RELATED"/>
    <property type="match status" value="1"/>
</dbReference>
<dbReference type="PANTHER" id="PTHR43780:SF2">
    <property type="entry name" value="1-AMINOCYCLOPROPANE-1-CARBOXYLATE DEAMINASE-RELATED"/>
    <property type="match status" value="1"/>
</dbReference>
<dbReference type="Pfam" id="PF00291">
    <property type="entry name" value="PALP"/>
    <property type="match status" value="1"/>
</dbReference>
<dbReference type="PIRSF" id="PIRSF006278">
    <property type="entry name" value="ACCD_DCysDesulf"/>
    <property type="match status" value="1"/>
</dbReference>
<dbReference type="SUPFAM" id="SSF53686">
    <property type="entry name" value="Tryptophan synthase beta subunit-like PLP-dependent enzymes"/>
    <property type="match status" value="1"/>
</dbReference>
<accession>Q9URX3</accession>
<protein>
    <recommendedName>
        <fullName>Probable 1-aminocyclopropane-1-carboxylate deaminase</fullName>
        <shortName>ACC deaminase</shortName>
        <shortName>ACCD</shortName>
        <ecNumber>3.5.99.7</ecNumber>
    </recommendedName>
</protein>
<organism>
    <name type="scientific">Schizosaccharomyces pombe (strain 972 / ATCC 24843)</name>
    <name type="common">Fission yeast</name>
    <dbReference type="NCBI Taxonomy" id="284812"/>
    <lineage>
        <taxon>Eukaryota</taxon>
        <taxon>Fungi</taxon>
        <taxon>Dikarya</taxon>
        <taxon>Ascomycota</taxon>
        <taxon>Taphrinomycotina</taxon>
        <taxon>Schizosaccharomycetes</taxon>
        <taxon>Schizosaccharomycetales</taxon>
        <taxon>Schizosaccharomycetaceae</taxon>
        <taxon>Schizosaccharomyces</taxon>
    </lineage>
</organism>
<gene>
    <name type="ORF">SPAC922.03</name>
</gene>
<keyword id="KW-0378">Hydrolase</keyword>
<keyword id="KW-0663">Pyridoxal phosphate</keyword>
<keyword id="KW-1185">Reference proteome</keyword>
<reference key="1">
    <citation type="journal article" date="2002" name="Nature">
        <title>The genome sequence of Schizosaccharomyces pombe.</title>
        <authorList>
            <person name="Wood V."/>
            <person name="Gwilliam R."/>
            <person name="Rajandream M.A."/>
            <person name="Lyne M.H."/>
            <person name="Lyne R."/>
            <person name="Stewart A."/>
            <person name="Sgouros J.G."/>
            <person name="Peat N."/>
            <person name="Hayles J."/>
            <person name="Baker S.G."/>
            <person name="Basham D."/>
            <person name="Bowman S."/>
            <person name="Brooks K."/>
            <person name="Brown D."/>
            <person name="Brown S."/>
            <person name="Chillingworth T."/>
            <person name="Churcher C.M."/>
            <person name="Collins M."/>
            <person name="Connor R."/>
            <person name="Cronin A."/>
            <person name="Davis P."/>
            <person name="Feltwell T."/>
            <person name="Fraser A."/>
            <person name="Gentles S."/>
            <person name="Goble A."/>
            <person name="Hamlin N."/>
            <person name="Harris D.E."/>
            <person name="Hidalgo J."/>
            <person name="Hodgson G."/>
            <person name="Holroyd S."/>
            <person name="Hornsby T."/>
            <person name="Howarth S."/>
            <person name="Huckle E.J."/>
            <person name="Hunt S."/>
            <person name="Jagels K."/>
            <person name="James K.D."/>
            <person name="Jones L."/>
            <person name="Jones M."/>
            <person name="Leather S."/>
            <person name="McDonald S."/>
            <person name="McLean J."/>
            <person name="Mooney P."/>
            <person name="Moule S."/>
            <person name="Mungall K.L."/>
            <person name="Murphy L.D."/>
            <person name="Niblett D."/>
            <person name="Odell C."/>
            <person name="Oliver K."/>
            <person name="O'Neil S."/>
            <person name="Pearson D."/>
            <person name="Quail M.A."/>
            <person name="Rabbinowitsch E."/>
            <person name="Rutherford K.M."/>
            <person name="Rutter S."/>
            <person name="Saunders D."/>
            <person name="Seeger K."/>
            <person name="Sharp S."/>
            <person name="Skelton J."/>
            <person name="Simmonds M.N."/>
            <person name="Squares R."/>
            <person name="Squares S."/>
            <person name="Stevens K."/>
            <person name="Taylor K."/>
            <person name="Taylor R.G."/>
            <person name="Tivey A."/>
            <person name="Walsh S.V."/>
            <person name="Warren T."/>
            <person name="Whitehead S."/>
            <person name="Woodward J.R."/>
            <person name="Volckaert G."/>
            <person name="Aert R."/>
            <person name="Robben J."/>
            <person name="Grymonprez B."/>
            <person name="Weltjens I."/>
            <person name="Vanstreels E."/>
            <person name="Rieger M."/>
            <person name="Schaefer M."/>
            <person name="Mueller-Auer S."/>
            <person name="Gabel C."/>
            <person name="Fuchs M."/>
            <person name="Duesterhoeft A."/>
            <person name="Fritzc C."/>
            <person name="Holzer E."/>
            <person name="Moestl D."/>
            <person name="Hilbert H."/>
            <person name="Borzym K."/>
            <person name="Langer I."/>
            <person name="Beck A."/>
            <person name="Lehrach H."/>
            <person name="Reinhardt R."/>
            <person name="Pohl T.M."/>
            <person name="Eger P."/>
            <person name="Zimmermann W."/>
            <person name="Wedler H."/>
            <person name="Wambutt R."/>
            <person name="Purnelle B."/>
            <person name="Goffeau A."/>
            <person name="Cadieu E."/>
            <person name="Dreano S."/>
            <person name="Gloux S."/>
            <person name="Lelaure V."/>
            <person name="Mottier S."/>
            <person name="Galibert F."/>
            <person name="Aves S.J."/>
            <person name="Xiang Z."/>
            <person name="Hunt C."/>
            <person name="Moore K."/>
            <person name="Hurst S.M."/>
            <person name="Lucas M."/>
            <person name="Rochet M."/>
            <person name="Gaillardin C."/>
            <person name="Tallada V.A."/>
            <person name="Garzon A."/>
            <person name="Thode G."/>
            <person name="Daga R.R."/>
            <person name="Cruzado L."/>
            <person name="Jimenez J."/>
            <person name="Sanchez M."/>
            <person name="del Rey F."/>
            <person name="Benito J."/>
            <person name="Dominguez A."/>
            <person name="Revuelta J.L."/>
            <person name="Moreno S."/>
            <person name="Armstrong J."/>
            <person name="Forsburg S.L."/>
            <person name="Cerutti L."/>
            <person name="Lowe T."/>
            <person name="McCombie W.R."/>
            <person name="Paulsen I."/>
            <person name="Potashkin J."/>
            <person name="Shpakovski G.V."/>
            <person name="Ussery D."/>
            <person name="Barrell B.G."/>
            <person name="Nurse P."/>
        </authorList>
    </citation>
    <scope>NUCLEOTIDE SEQUENCE [LARGE SCALE GENOMIC DNA]</scope>
    <source>
        <strain>972 / ATCC 24843</strain>
    </source>
</reference>
<comment type="function">
    <text evidence="1">Catalyzes a cyclopropane ring-opening reaction, the irreversible conversion of 1-aminocyclopropane-1-carboxylate (ACC) to ammonia and alpha-ketobutyrate.</text>
</comment>
<comment type="catalytic activity">
    <reaction>
        <text>1-aminocyclopropane-1-carboxylate + H2O = 2-oxobutanoate + NH4(+)</text>
        <dbReference type="Rhea" id="RHEA:16933"/>
        <dbReference type="ChEBI" id="CHEBI:15377"/>
        <dbReference type="ChEBI" id="CHEBI:16763"/>
        <dbReference type="ChEBI" id="CHEBI:28938"/>
        <dbReference type="ChEBI" id="CHEBI:58360"/>
        <dbReference type="EC" id="3.5.99.7"/>
    </reaction>
</comment>
<comment type="cofactor">
    <cofactor evidence="1">
        <name>pyridoxal 5'-phosphate</name>
        <dbReference type="ChEBI" id="CHEBI:597326"/>
    </cofactor>
</comment>
<comment type="similarity">
    <text evidence="2">Belongs to the ACC deaminase/D-cysteine desulfhydrase family.</text>
</comment>
<name>1A1D_SCHPO</name>
<evidence type="ECO:0000250" key="1"/>
<evidence type="ECO:0000305" key="2"/>